<dbReference type="EC" id="3.1.-.-"/>
<dbReference type="EMBL" id="CH902617">
    <property type="protein sequence ID" value="EDV42027.1"/>
    <property type="molecule type" value="Genomic_DNA"/>
</dbReference>
<dbReference type="SMR" id="B3M070"/>
<dbReference type="FunCoup" id="B3M070">
    <property type="interactions" value="2"/>
</dbReference>
<dbReference type="STRING" id="7217.B3M070"/>
<dbReference type="EnsemblMetazoa" id="FBtr0121907">
    <property type="protein sequence ID" value="FBpp0120399"/>
    <property type="gene ID" value="FBgn0094225"/>
</dbReference>
<dbReference type="EnsemblMetazoa" id="XM_001953430.4">
    <property type="protein sequence ID" value="XP_001953466.1"/>
    <property type="gene ID" value="LOC6499994"/>
</dbReference>
<dbReference type="GeneID" id="6499994"/>
<dbReference type="KEGG" id="dan:6499994"/>
<dbReference type="eggNOG" id="ENOG502QQQR">
    <property type="taxonomic scope" value="Eukaryota"/>
</dbReference>
<dbReference type="HOGENOM" id="CLU_054760_0_1_1"/>
<dbReference type="InParanoid" id="B3M070"/>
<dbReference type="OMA" id="MVKCGFI"/>
<dbReference type="OrthoDB" id="9998343at2759"/>
<dbReference type="PhylomeDB" id="B3M070"/>
<dbReference type="Proteomes" id="UP000007801">
    <property type="component" value="Unassembled WGS sequence"/>
</dbReference>
<dbReference type="GO" id="GO:0016788">
    <property type="term" value="F:hydrolase activity, acting on ester bonds"/>
    <property type="evidence" value="ECO:0007669"/>
    <property type="project" value="InterPro"/>
</dbReference>
<dbReference type="GO" id="GO:0008270">
    <property type="term" value="F:zinc ion binding"/>
    <property type="evidence" value="ECO:0007669"/>
    <property type="project" value="InterPro"/>
</dbReference>
<dbReference type="GO" id="GO:0009056">
    <property type="term" value="P:catabolic process"/>
    <property type="evidence" value="ECO:0007669"/>
    <property type="project" value="InterPro"/>
</dbReference>
<dbReference type="CDD" id="cd00530">
    <property type="entry name" value="PTE"/>
    <property type="match status" value="1"/>
</dbReference>
<dbReference type="Gene3D" id="3.20.20.140">
    <property type="entry name" value="Metal-dependent hydrolases"/>
    <property type="match status" value="1"/>
</dbReference>
<dbReference type="InterPro" id="IPR017947">
    <property type="entry name" value="AryldialkylPase_Zn-BS"/>
</dbReference>
<dbReference type="InterPro" id="IPR032466">
    <property type="entry name" value="Metal_Hydrolase"/>
</dbReference>
<dbReference type="InterPro" id="IPR001559">
    <property type="entry name" value="Phosphotriesterase"/>
</dbReference>
<dbReference type="PANTHER" id="PTHR10819">
    <property type="entry name" value="PHOSPHOTRIESTERASE-RELATED"/>
    <property type="match status" value="1"/>
</dbReference>
<dbReference type="PANTHER" id="PTHR10819:SF3">
    <property type="entry name" value="PHOSPHOTRIESTERASE-RELATED PROTEIN"/>
    <property type="match status" value="1"/>
</dbReference>
<dbReference type="Pfam" id="PF02126">
    <property type="entry name" value="PTE"/>
    <property type="match status" value="1"/>
</dbReference>
<dbReference type="SUPFAM" id="SSF51556">
    <property type="entry name" value="Metallo-dependent hydrolases"/>
    <property type="match status" value="1"/>
</dbReference>
<dbReference type="PROSITE" id="PS01322">
    <property type="entry name" value="PHOSPHOTRIESTERASE_1"/>
    <property type="match status" value="1"/>
</dbReference>
<dbReference type="PROSITE" id="PS51347">
    <property type="entry name" value="PHOSPHOTRIESTERASE_2"/>
    <property type="match status" value="1"/>
</dbReference>
<accession>B3M070</accession>
<proteinExistence type="inferred from homology"/>
<gene>
    <name type="ORF">GF17207</name>
</gene>
<name>PTER_DROAN</name>
<organism>
    <name type="scientific">Drosophila ananassae</name>
    <name type="common">Fruit fly</name>
    <dbReference type="NCBI Taxonomy" id="7217"/>
    <lineage>
        <taxon>Eukaryota</taxon>
        <taxon>Metazoa</taxon>
        <taxon>Ecdysozoa</taxon>
        <taxon>Arthropoda</taxon>
        <taxon>Hexapoda</taxon>
        <taxon>Insecta</taxon>
        <taxon>Pterygota</taxon>
        <taxon>Neoptera</taxon>
        <taxon>Endopterygota</taxon>
        <taxon>Diptera</taxon>
        <taxon>Brachycera</taxon>
        <taxon>Muscomorpha</taxon>
        <taxon>Ephydroidea</taxon>
        <taxon>Drosophilidae</taxon>
        <taxon>Drosophila</taxon>
        <taxon>Sophophora</taxon>
    </lineage>
</organism>
<sequence>MSTVQTVLGSITPNLLGRTLTHEHVALDFEHFYRPPPPDFESELKAKISMSTLGYVRLYPYSSKENVRFYDEEALEAAKKDILLYKKHGGGSIVENSSYGLKRNLEIIVELAKSTGVHFIAGTGHYIHAMQDARNASLTVEQLSDLYSKDIITGLEVNGKMVKCGFIGEVASVYPIHDFEKHCIKAAGEIQEVLGCGVSMHPHRVTKAPFEIMRLYLEAGGRADKCVMSHLDRTIFDVDELLEFAKLGCYIQYDLFGTECSFYQLNTSVDMISDGQRIDNLMKLINEGLVDKLLMSHDIHTKHRLTSYGGHGYHHIYTNILPRMFARGVTVEQVEQMTVTNPANWLAFNP</sequence>
<comment type="cofactor">
    <cofactor evidence="1">
        <name>a divalent metal cation</name>
        <dbReference type="ChEBI" id="CHEBI:60240"/>
    </cofactor>
    <text evidence="1">Binds 2 divalent metal cations per subunit.</text>
</comment>
<comment type="similarity">
    <text evidence="2">Belongs to the metallo-dependent hydrolases superfamily. Phosphotriesterase family.</text>
</comment>
<evidence type="ECO:0000250" key="1">
    <source>
        <dbReference type="UniProtKB" id="P45548"/>
    </source>
</evidence>
<evidence type="ECO:0000255" key="2">
    <source>
        <dbReference type="PROSITE-ProRule" id="PRU00679"/>
    </source>
</evidence>
<keyword id="KW-0378">Hydrolase</keyword>
<keyword id="KW-0479">Metal-binding</keyword>
<keyword id="KW-1185">Reference proteome</keyword>
<feature type="chain" id="PRO_0000388673" description="Phosphotriesterase-related protein">
    <location>
        <begin position="1"/>
        <end position="350"/>
    </location>
</feature>
<feature type="binding site" evidence="1">
    <location>
        <position position="22"/>
    </location>
    <ligand>
        <name>a divalent metal cation</name>
        <dbReference type="ChEBI" id="CHEBI:60240"/>
        <label>1</label>
    </ligand>
</feature>
<feature type="binding site" evidence="1">
    <location>
        <position position="24"/>
    </location>
    <ligand>
        <name>a divalent metal cation</name>
        <dbReference type="ChEBI" id="CHEBI:60240"/>
        <label>1</label>
    </ligand>
</feature>
<feature type="binding site" evidence="1">
    <location>
        <position position="169"/>
    </location>
    <ligand>
        <name>a divalent metal cation</name>
        <dbReference type="ChEBI" id="CHEBI:60240"/>
        <label>1</label>
    </ligand>
</feature>
<feature type="binding site" evidence="1">
    <location>
        <position position="169"/>
    </location>
    <ligand>
        <name>a divalent metal cation</name>
        <dbReference type="ChEBI" id="CHEBI:60240"/>
        <label>2</label>
    </ligand>
</feature>
<feature type="binding site" evidence="1">
    <location>
        <position position="201"/>
    </location>
    <ligand>
        <name>a divalent metal cation</name>
        <dbReference type="ChEBI" id="CHEBI:60240"/>
        <label>2</label>
    </ligand>
</feature>
<feature type="binding site" evidence="1">
    <location>
        <position position="230"/>
    </location>
    <ligand>
        <name>a divalent metal cation</name>
        <dbReference type="ChEBI" id="CHEBI:60240"/>
        <label>2</label>
    </ligand>
</feature>
<feature type="binding site" evidence="1">
    <location>
        <position position="298"/>
    </location>
    <ligand>
        <name>a divalent metal cation</name>
        <dbReference type="ChEBI" id="CHEBI:60240"/>
        <label>1</label>
    </ligand>
</feature>
<protein>
    <recommendedName>
        <fullName>Phosphotriesterase-related protein</fullName>
        <ecNumber>3.1.-.-</ecNumber>
    </recommendedName>
    <alternativeName>
        <fullName>Parathion hydrolase-related protein</fullName>
    </alternativeName>
</protein>
<reference key="1">
    <citation type="journal article" date="2007" name="Nature">
        <title>Evolution of genes and genomes on the Drosophila phylogeny.</title>
        <authorList>
            <consortium name="Drosophila 12 genomes consortium"/>
        </authorList>
    </citation>
    <scope>NUCLEOTIDE SEQUENCE [LARGE SCALE GENOMIC DNA]</scope>
    <source>
        <strain>Tucson 14024-0371.13</strain>
    </source>
</reference>